<reference key="1">
    <citation type="journal article" date="2011" name="J. Bacteriol.">
        <title>Comparative genomics of 28 Salmonella enterica isolates: evidence for CRISPR-mediated adaptive sublineage evolution.</title>
        <authorList>
            <person name="Fricke W.F."/>
            <person name="Mammel M.K."/>
            <person name="McDermott P.F."/>
            <person name="Tartera C."/>
            <person name="White D.G."/>
            <person name="Leclerc J.E."/>
            <person name="Ravel J."/>
            <person name="Cebula T.A."/>
        </authorList>
    </citation>
    <scope>NUCLEOTIDE SEQUENCE [LARGE SCALE GENOMIC DNA]</scope>
    <source>
        <strain>SL483</strain>
    </source>
</reference>
<protein>
    <recommendedName>
        <fullName evidence="1">Endoribonuclease YbeY</fullName>
        <ecNumber evidence="1">3.1.-.-</ecNumber>
    </recommendedName>
</protein>
<feature type="chain" id="PRO_1000089201" description="Endoribonuclease YbeY">
    <location>
        <begin position="1"/>
        <end position="157"/>
    </location>
</feature>
<feature type="binding site" evidence="1">
    <location>
        <position position="114"/>
    </location>
    <ligand>
        <name>Zn(2+)</name>
        <dbReference type="ChEBI" id="CHEBI:29105"/>
        <note>catalytic</note>
    </ligand>
</feature>
<feature type="binding site" evidence="1">
    <location>
        <position position="118"/>
    </location>
    <ligand>
        <name>Zn(2+)</name>
        <dbReference type="ChEBI" id="CHEBI:29105"/>
        <note>catalytic</note>
    </ligand>
</feature>
<feature type="binding site" evidence="1">
    <location>
        <position position="124"/>
    </location>
    <ligand>
        <name>Zn(2+)</name>
        <dbReference type="ChEBI" id="CHEBI:29105"/>
        <note>catalytic</note>
    </ligand>
</feature>
<organism>
    <name type="scientific">Salmonella agona (strain SL483)</name>
    <dbReference type="NCBI Taxonomy" id="454166"/>
    <lineage>
        <taxon>Bacteria</taxon>
        <taxon>Pseudomonadati</taxon>
        <taxon>Pseudomonadota</taxon>
        <taxon>Gammaproteobacteria</taxon>
        <taxon>Enterobacterales</taxon>
        <taxon>Enterobacteriaceae</taxon>
        <taxon>Salmonella</taxon>
    </lineage>
</organism>
<name>YBEY_SALA4</name>
<accession>B5EZB0</accession>
<proteinExistence type="inferred from homology"/>
<sequence length="157" mass="17810">MSQVILDLQLACENHAGLPDEAQFQRWLDGVIPQFQEEAEVTIRLVDEAESHDLNLTYRGKDKPTNVLSFPFEAPPGIEMPLLGDLIICRQVVEQEAQEQSKPLEAHWAHMVVHGSLHLLGYDHIDDDEAEEMESLETEIMLAMGYEDPYIAEKIAE</sequence>
<comment type="function">
    <text evidence="1">Single strand-specific metallo-endoribonuclease involved in late-stage 70S ribosome quality control and in maturation of the 3' terminus of the 16S rRNA.</text>
</comment>
<comment type="cofactor">
    <cofactor evidence="1">
        <name>Zn(2+)</name>
        <dbReference type="ChEBI" id="CHEBI:29105"/>
    </cofactor>
    <text evidence="1">Binds 1 zinc ion.</text>
</comment>
<comment type="subcellular location">
    <subcellularLocation>
        <location evidence="1">Cytoplasm</location>
    </subcellularLocation>
</comment>
<comment type="similarity">
    <text evidence="1">Belongs to the endoribonuclease YbeY family.</text>
</comment>
<evidence type="ECO:0000255" key="1">
    <source>
        <dbReference type="HAMAP-Rule" id="MF_00009"/>
    </source>
</evidence>
<dbReference type="EC" id="3.1.-.-" evidence="1"/>
<dbReference type="EMBL" id="CP001138">
    <property type="protein sequence ID" value="ACH52352.1"/>
    <property type="molecule type" value="Genomic_DNA"/>
</dbReference>
<dbReference type="RefSeq" id="WP_000084477.1">
    <property type="nucleotide sequence ID" value="NC_011149.1"/>
</dbReference>
<dbReference type="SMR" id="B5EZB0"/>
<dbReference type="KEGG" id="sea:SeAg_B0713"/>
<dbReference type="HOGENOM" id="CLU_106710_0_1_6"/>
<dbReference type="Proteomes" id="UP000008819">
    <property type="component" value="Chromosome"/>
</dbReference>
<dbReference type="GO" id="GO:0005737">
    <property type="term" value="C:cytoplasm"/>
    <property type="evidence" value="ECO:0007669"/>
    <property type="project" value="UniProtKB-SubCell"/>
</dbReference>
<dbReference type="GO" id="GO:0004222">
    <property type="term" value="F:metalloendopeptidase activity"/>
    <property type="evidence" value="ECO:0007669"/>
    <property type="project" value="InterPro"/>
</dbReference>
<dbReference type="GO" id="GO:0004521">
    <property type="term" value="F:RNA endonuclease activity"/>
    <property type="evidence" value="ECO:0007669"/>
    <property type="project" value="UniProtKB-UniRule"/>
</dbReference>
<dbReference type="GO" id="GO:0008270">
    <property type="term" value="F:zinc ion binding"/>
    <property type="evidence" value="ECO:0007669"/>
    <property type="project" value="UniProtKB-UniRule"/>
</dbReference>
<dbReference type="GO" id="GO:0006364">
    <property type="term" value="P:rRNA processing"/>
    <property type="evidence" value="ECO:0007669"/>
    <property type="project" value="UniProtKB-UniRule"/>
</dbReference>
<dbReference type="Gene3D" id="3.40.390.30">
    <property type="entry name" value="Metalloproteases ('zincins'), catalytic domain"/>
    <property type="match status" value="1"/>
</dbReference>
<dbReference type="HAMAP" id="MF_00009">
    <property type="entry name" value="Endoribonucl_YbeY"/>
    <property type="match status" value="1"/>
</dbReference>
<dbReference type="InterPro" id="IPR023091">
    <property type="entry name" value="MetalPrtase_cat_dom_sf_prd"/>
</dbReference>
<dbReference type="InterPro" id="IPR002036">
    <property type="entry name" value="YbeY"/>
</dbReference>
<dbReference type="InterPro" id="IPR020549">
    <property type="entry name" value="YbeY_CS"/>
</dbReference>
<dbReference type="NCBIfam" id="TIGR00043">
    <property type="entry name" value="rRNA maturation RNase YbeY"/>
    <property type="match status" value="1"/>
</dbReference>
<dbReference type="PANTHER" id="PTHR46986">
    <property type="entry name" value="ENDORIBONUCLEASE YBEY, CHLOROPLASTIC"/>
    <property type="match status" value="1"/>
</dbReference>
<dbReference type="PANTHER" id="PTHR46986:SF1">
    <property type="entry name" value="ENDORIBONUCLEASE YBEY, CHLOROPLASTIC"/>
    <property type="match status" value="1"/>
</dbReference>
<dbReference type="Pfam" id="PF02130">
    <property type="entry name" value="YbeY"/>
    <property type="match status" value="1"/>
</dbReference>
<dbReference type="SUPFAM" id="SSF55486">
    <property type="entry name" value="Metalloproteases ('zincins'), catalytic domain"/>
    <property type="match status" value="1"/>
</dbReference>
<dbReference type="PROSITE" id="PS01306">
    <property type="entry name" value="UPF0054"/>
    <property type="match status" value="1"/>
</dbReference>
<gene>
    <name evidence="1" type="primary">ybeY</name>
    <name type="ordered locus">SeAg_B0713</name>
</gene>
<keyword id="KW-0963">Cytoplasm</keyword>
<keyword id="KW-0255">Endonuclease</keyword>
<keyword id="KW-0378">Hydrolase</keyword>
<keyword id="KW-0479">Metal-binding</keyword>
<keyword id="KW-0540">Nuclease</keyword>
<keyword id="KW-0690">Ribosome biogenesis</keyword>
<keyword id="KW-0698">rRNA processing</keyword>
<keyword id="KW-0862">Zinc</keyword>